<feature type="chain" id="PRO_0000330417" description="HssA/B-like protein 49">
    <location>
        <begin position="1"/>
        <end position="94"/>
    </location>
</feature>
<feature type="region of interest" description="Disordered" evidence="1">
    <location>
        <begin position="1"/>
        <end position="20"/>
    </location>
</feature>
<name>HSL49_DICDI</name>
<comment type="similarity">
    <text evidence="2">Belongs to the hssA/B family.</text>
</comment>
<evidence type="ECO:0000256" key="1">
    <source>
        <dbReference type="SAM" id="MobiDB-lite"/>
    </source>
</evidence>
<evidence type="ECO:0000305" key="2"/>
<dbReference type="EMBL" id="AAFI02000040">
    <property type="protein sequence ID" value="EAL66803.1"/>
    <property type="molecule type" value="Genomic_DNA"/>
</dbReference>
<dbReference type="RefSeq" id="XP_640767.1">
    <property type="nucleotide sequence ID" value="XM_635675.1"/>
</dbReference>
<dbReference type="PaxDb" id="44689-DDB0233464"/>
<dbReference type="EnsemblProtists" id="EAL66803">
    <property type="protein sequence ID" value="EAL66803"/>
    <property type="gene ID" value="DDB_G0281013"/>
</dbReference>
<dbReference type="GeneID" id="8622820"/>
<dbReference type="KEGG" id="ddi:DDB_G0281013"/>
<dbReference type="dictyBase" id="DDB_G0281013"/>
<dbReference type="HOGENOM" id="CLU_181850_0_0_1"/>
<dbReference type="InParanoid" id="Q54UK9"/>
<dbReference type="PRO" id="PR:Q54UK9"/>
<dbReference type="Proteomes" id="UP000002195">
    <property type="component" value="Chromosome 3"/>
</dbReference>
<dbReference type="GO" id="GO:0030587">
    <property type="term" value="P:sorocarp development"/>
    <property type="evidence" value="ECO:0000318"/>
    <property type="project" value="GO_Central"/>
</dbReference>
<dbReference type="InterPro" id="IPR050533">
    <property type="entry name" value="HssA/B-like_chaperone"/>
</dbReference>
<dbReference type="InterPro" id="IPR008455">
    <property type="entry name" value="HssA/B-related"/>
</dbReference>
<dbReference type="PANTHER" id="PTHR31059">
    <property type="entry name" value="HSSA/B-LIKE PROTEIN 1-RELATED-RELATED"/>
    <property type="match status" value="1"/>
</dbReference>
<dbReference type="PANTHER" id="PTHR31059:SF5">
    <property type="entry name" value="HSSA_B-LIKE PROTEIN 1-RELATED"/>
    <property type="match status" value="1"/>
</dbReference>
<dbReference type="Pfam" id="PF05710">
    <property type="entry name" value="Coiled"/>
    <property type="match status" value="1"/>
</dbReference>
<gene>
    <name type="primary">hssl49</name>
    <name type="ORF">DDB_G0281013</name>
</gene>
<accession>Q54UK9</accession>
<reference key="1">
    <citation type="journal article" date="2005" name="Nature">
        <title>The genome of the social amoeba Dictyostelium discoideum.</title>
        <authorList>
            <person name="Eichinger L."/>
            <person name="Pachebat J.A."/>
            <person name="Gloeckner G."/>
            <person name="Rajandream M.A."/>
            <person name="Sucgang R."/>
            <person name="Berriman M."/>
            <person name="Song J."/>
            <person name="Olsen R."/>
            <person name="Szafranski K."/>
            <person name="Xu Q."/>
            <person name="Tunggal B."/>
            <person name="Kummerfeld S."/>
            <person name="Madera M."/>
            <person name="Konfortov B.A."/>
            <person name="Rivero F."/>
            <person name="Bankier A.T."/>
            <person name="Lehmann R."/>
            <person name="Hamlin N."/>
            <person name="Davies R."/>
            <person name="Gaudet P."/>
            <person name="Fey P."/>
            <person name="Pilcher K."/>
            <person name="Chen G."/>
            <person name="Saunders D."/>
            <person name="Sodergren E.J."/>
            <person name="Davis P."/>
            <person name="Kerhornou A."/>
            <person name="Nie X."/>
            <person name="Hall N."/>
            <person name="Anjard C."/>
            <person name="Hemphill L."/>
            <person name="Bason N."/>
            <person name="Farbrother P."/>
            <person name="Desany B."/>
            <person name="Just E."/>
            <person name="Morio T."/>
            <person name="Rost R."/>
            <person name="Churcher C.M."/>
            <person name="Cooper J."/>
            <person name="Haydock S."/>
            <person name="van Driessche N."/>
            <person name="Cronin A."/>
            <person name="Goodhead I."/>
            <person name="Muzny D.M."/>
            <person name="Mourier T."/>
            <person name="Pain A."/>
            <person name="Lu M."/>
            <person name="Harper D."/>
            <person name="Lindsay R."/>
            <person name="Hauser H."/>
            <person name="James K.D."/>
            <person name="Quiles M."/>
            <person name="Madan Babu M."/>
            <person name="Saito T."/>
            <person name="Buchrieser C."/>
            <person name="Wardroper A."/>
            <person name="Felder M."/>
            <person name="Thangavelu M."/>
            <person name="Johnson D."/>
            <person name="Knights A."/>
            <person name="Loulseged H."/>
            <person name="Mungall K.L."/>
            <person name="Oliver K."/>
            <person name="Price C."/>
            <person name="Quail M.A."/>
            <person name="Urushihara H."/>
            <person name="Hernandez J."/>
            <person name="Rabbinowitsch E."/>
            <person name="Steffen D."/>
            <person name="Sanders M."/>
            <person name="Ma J."/>
            <person name="Kohara Y."/>
            <person name="Sharp S."/>
            <person name="Simmonds M.N."/>
            <person name="Spiegler S."/>
            <person name="Tivey A."/>
            <person name="Sugano S."/>
            <person name="White B."/>
            <person name="Walker D."/>
            <person name="Woodward J.R."/>
            <person name="Winckler T."/>
            <person name="Tanaka Y."/>
            <person name="Shaulsky G."/>
            <person name="Schleicher M."/>
            <person name="Weinstock G.M."/>
            <person name="Rosenthal A."/>
            <person name="Cox E.C."/>
            <person name="Chisholm R.L."/>
            <person name="Gibbs R.A."/>
            <person name="Loomis W.F."/>
            <person name="Platzer M."/>
            <person name="Kay R.R."/>
            <person name="Williams J.G."/>
            <person name="Dear P.H."/>
            <person name="Noegel A.A."/>
            <person name="Barrell B.G."/>
            <person name="Kuspa A."/>
        </authorList>
    </citation>
    <scope>NUCLEOTIDE SEQUENCE [LARGE SCALE GENOMIC DNA]</scope>
    <source>
        <strain>AX4</strain>
    </source>
</reference>
<organism>
    <name type="scientific">Dictyostelium discoideum</name>
    <name type="common">Social amoeba</name>
    <dbReference type="NCBI Taxonomy" id="44689"/>
    <lineage>
        <taxon>Eukaryota</taxon>
        <taxon>Amoebozoa</taxon>
        <taxon>Evosea</taxon>
        <taxon>Eumycetozoa</taxon>
        <taxon>Dictyostelia</taxon>
        <taxon>Dictyosteliales</taxon>
        <taxon>Dictyosteliaceae</taxon>
        <taxon>Dictyostelium</taxon>
    </lineage>
</organism>
<proteinExistence type="inferred from homology"/>
<sequence length="94" mass="8460">MTLFSSISSISNPMTSSKSSIASFGSGTSMGSNSIACGGGCGGGSGGILGLGLGLGLNLFGGSRGACGGNSGSGNPGNGPCSGGKCCGGPCCGI</sequence>
<protein>
    <recommendedName>
        <fullName>HssA/B-like protein 49</fullName>
    </recommendedName>
</protein>
<keyword id="KW-1185">Reference proteome</keyword>